<sequence length="163" mass="18342">MHKKYFIGTSILIAVFVVIFDQVTKYIIATTMKIGDSFEVIPHFLNITSHRNNGAAWGILSGKMTFFFIITIIILIALVYFFIKDAQYNLFMQVAISLLFAGALGNFIDRILTGEVVDFIDTNIFGYDFPIFNIADSSLTIGVILIIIALLKDTSNKKEKEVK</sequence>
<dbReference type="EC" id="3.4.23.36" evidence="1"/>
<dbReference type="EMBL" id="AP009324">
    <property type="protein sequence ID" value="BAF78069.1"/>
    <property type="molecule type" value="Genomic_DNA"/>
</dbReference>
<dbReference type="RefSeq" id="WP_000549207.1">
    <property type="nucleotide sequence ID" value="NZ_CTYB01000004.1"/>
</dbReference>
<dbReference type="SMR" id="A7X1E3"/>
<dbReference type="KEGG" id="saw:SAHV_1186"/>
<dbReference type="HOGENOM" id="CLU_083252_3_0_9"/>
<dbReference type="UniPathway" id="UPA00665"/>
<dbReference type="GO" id="GO:0005886">
    <property type="term" value="C:plasma membrane"/>
    <property type="evidence" value="ECO:0007669"/>
    <property type="project" value="UniProtKB-SubCell"/>
</dbReference>
<dbReference type="GO" id="GO:0004190">
    <property type="term" value="F:aspartic-type endopeptidase activity"/>
    <property type="evidence" value="ECO:0007669"/>
    <property type="project" value="UniProtKB-UniRule"/>
</dbReference>
<dbReference type="GO" id="GO:0006508">
    <property type="term" value="P:proteolysis"/>
    <property type="evidence" value="ECO:0007669"/>
    <property type="project" value="UniProtKB-KW"/>
</dbReference>
<dbReference type="HAMAP" id="MF_00161">
    <property type="entry name" value="LspA"/>
    <property type="match status" value="1"/>
</dbReference>
<dbReference type="InterPro" id="IPR001872">
    <property type="entry name" value="Peptidase_A8"/>
</dbReference>
<dbReference type="NCBIfam" id="TIGR00077">
    <property type="entry name" value="lspA"/>
    <property type="match status" value="1"/>
</dbReference>
<dbReference type="PANTHER" id="PTHR33695">
    <property type="entry name" value="LIPOPROTEIN SIGNAL PEPTIDASE"/>
    <property type="match status" value="1"/>
</dbReference>
<dbReference type="PANTHER" id="PTHR33695:SF1">
    <property type="entry name" value="LIPOPROTEIN SIGNAL PEPTIDASE"/>
    <property type="match status" value="1"/>
</dbReference>
<dbReference type="Pfam" id="PF01252">
    <property type="entry name" value="Peptidase_A8"/>
    <property type="match status" value="1"/>
</dbReference>
<dbReference type="PRINTS" id="PR00781">
    <property type="entry name" value="LIPOSIGPTASE"/>
</dbReference>
<dbReference type="PROSITE" id="PS00855">
    <property type="entry name" value="SPASE_II"/>
    <property type="match status" value="1"/>
</dbReference>
<protein>
    <recommendedName>
        <fullName evidence="1">Lipoprotein signal peptidase</fullName>
        <ecNumber evidence="1">3.4.23.36</ecNumber>
    </recommendedName>
    <alternativeName>
        <fullName evidence="1">Prolipoprotein signal peptidase</fullName>
    </alternativeName>
    <alternativeName>
        <fullName evidence="1">Signal peptidase II</fullName>
        <shortName evidence="1">SPase II</shortName>
    </alternativeName>
</protein>
<name>LSPA_STAA1</name>
<proteinExistence type="inferred from homology"/>
<accession>A7X1E3</accession>
<keyword id="KW-0064">Aspartyl protease</keyword>
<keyword id="KW-1003">Cell membrane</keyword>
<keyword id="KW-0378">Hydrolase</keyword>
<keyword id="KW-0472">Membrane</keyword>
<keyword id="KW-0645">Protease</keyword>
<keyword id="KW-0812">Transmembrane</keyword>
<keyword id="KW-1133">Transmembrane helix</keyword>
<evidence type="ECO:0000255" key="1">
    <source>
        <dbReference type="HAMAP-Rule" id="MF_00161"/>
    </source>
</evidence>
<comment type="function">
    <text evidence="1">This protein specifically catalyzes the removal of signal peptides from prolipoproteins.</text>
</comment>
<comment type="catalytic activity">
    <reaction evidence="1">
        <text>Release of signal peptides from bacterial membrane prolipoproteins. Hydrolyzes -Xaa-Yaa-Zaa-|-(S,diacylglyceryl)Cys-, in which Xaa is hydrophobic (preferably Leu), and Yaa (Ala or Ser) and Zaa (Gly or Ala) have small, neutral side chains.</text>
        <dbReference type="EC" id="3.4.23.36"/>
    </reaction>
</comment>
<comment type="pathway">
    <text evidence="1">Protein modification; lipoprotein biosynthesis (signal peptide cleavage).</text>
</comment>
<comment type="subcellular location">
    <subcellularLocation>
        <location evidence="1">Cell membrane</location>
        <topology evidence="1">Multi-pass membrane protein</topology>
    </subcellularLocation>
</comment>
<comment type="similarity">
    <text evidence="1">Belongs to the peptidase A8 family.</text>
</comment>
<reference key="1">
    <citation type="journal article" date="2008" name="Antimicrob. Agents Chemother.">
        <title>Mutated response regulator graR is responsible for phenotypic conversion of Staphylococcus aureus from heterogeneous vancomycin-intermediate resistance to vancomycin-intermediate resistance.</title>
        <authorList>
            <person name="Neoh H.-M."/>
            <person name="Cui L."/>
            <person name="Yuzawa H."/>
            <person name="Takeuchi F."/>
            <person name="Matsuo M."/>
            <person name="Hiramatsu K."/>
        </authorList>
    </citation>
    <scope>NUCLEOTIDE SEQUENCE [LARGE SCALE GENOMIC DNA]</scope>
    <source>
        <strain>Mu3 / ATCC 700698</strain>
    </source>
</reference>
<feature type="chain" id="PRO_1000038826" description="Lipoprotein signal peptidase">
    <location>
        <begin position="1"/>
        <end position="163"/>
    </location>
</feature>
<feature type="transmembrane region" description="Helical" evidence="1">
    <location>
        <begin position="11"/>
        <end position="31"/>
    </location>
</feature>
<feature type="transmembrane region" description="Helical" evidence="1">
    <location>
        <begin position="63"/>
        <end position="83"/>
    </location>
</feature>
<feature type="transmembrane region" description="Helical" evidence="1">
    <location>
        <begin position="88"/>
        <end position="108"/>
    </location>
</feature>
<feature type="transmembrane region" description="Helical" evidence="1">
    <location>
        <begin position="131"/>
        <end position="151"/>
    </location>
</feature>
<feature type="active site" evidence="1">
    <location>
        <position position="118"/>
    </location>
</feature>
<feature type="active site" evidence="1">
    <location>
        <position position="136"/>
    </location>
</feature>
<organism>
    <name type="scientific">Staphylococcus aureus (strain Mu3 / ATCC 700698)</name>
    <dbReference type="NCBI Taxonomy" id="418127"/>
    <lineage>
        <taxon>Bacteria</taxon>
        <taxon>Bacillati</taxon>
        <taxon>Bacillota</taxon>
        <taxon>Bacilli</taxon>
        <taxon>Bacillales</taxon>
        <taxon>Staphylococcaceae</taxon>
        <taxon>Staphylococcus</taxon>
    </lineage>
</organism>
<gene>
    <name evidence="1" type="primary">lspA</name>
    <name type="ordered locus">SAHV_1186</name>
</gene>